<protein>
    <recommendedName>
        <fullName evidence="1">Lipoprotein signal peptidase</fullName>
        <ecNumber evidence="1">3.4.23.36</ecNumber>
    </recommendedName>
    <alternativeName>
        <fullName evidence="1">Prolipoprotein signal peptidase</fullName>
    </alternativeName>
    <alternativeName>
        <fullName evidence="1">Signal peptidase II</fullName>
        <shortName evidence="1">SPase II</shortName>
    </alternativeName>
</protein>
<dbReference type="EC" id="3.4.23.36" evidence="1"/>
<dbReference type="EMBL" id="AE014074">
    <property type="protein sequence ID" value="AAM79163.1"/>
    <property type="molecule type" value="Genomic_DNA"/>
</dbReference>
<dbReference type="RefSeq" id="WP_002985097.1">
    <property type="nucleotide sequence ID" value="NC_004070.1"/>
</dbReference>
<dbReference type="SMR" id="P0DC20"/>
<dbReference type="GeneID" id="69901059"/>
<dbReference type="KEGG" id="spg:SpyM3_0556"/>
<dbReference type="HOGENOM" id="CLU_083252_3_3_9"/>
<dbReference type="UniPathway" id="UPA00665"/>
<dbReference type="Proteomes" id="UP000000564">
    <property type="component" value="Chromosome"/>
</dbReference>
<dbReference type="GO" id="GO:0005886">
    <property type="term" value="C:plasma membrane"/>
    <property type="evidence" value="ECO:0007669"/>
    <property type="project" value="UniProtKB-SubCell"/>
</dbReference>
<dbReference type="GO" id="GO:0004190">
    <property type="term" value="F:aspartic-type endopeptidase activity"/>
    <property type="evidence" value="ECO:0007669"/>
    <property type="project" value="UniProtKB-UniRule"/>
</dbReference>
<dbReference type="GO" id="GO:0006508">
    <property type="term" value="P:proteolysis"/>
    <property type="evidence" value="ECO:0007669"/>
    <property type="project" value="UniProtKB-KW"/>
</dbReference>
<dbReference type="HAMAP" id="MF_00161">
    <property type="entry name" value="LspA"/>
    <property type="match status" value="1"/>
</dbReference>
<dbReference type="InterPro" id="IPR001872">
    <property type="entry name" value="Peptidase_A8"/>
</dbReference>
<dbReference type="NCBIfam" id="TIGR00077">
    <property type="entry name" value="lspA"/>
    <property type="match status" value="1"/>
</dbReference>
<dbReference type="PANTHER" id="PTHR33695">
    <property type="entry name" value="LIPOPROTEIN SIGNAL PEPTIDASE"/>
    <property type="match status" value="1"/>
</dbReference>
<dbReference type="PANTHER" id="PTHR33695:SF1">
    <property type="entry name" value="LIPOPROTEIN SIGNAL PEPTIDASE"/>
    <property type="match status" value="1"/>
</dbReference>
<dbReference type="Pfam" id="PF01252">
    <property type="entry name" value="Peptidase_A8"/>
    <property type="match status" value="1"/>
</dbReference>
<dbReference type="PRINTS" id="PR00781">
    <property type="entry name" value="LIPOSIGPTASE"/>
</dbReference>
<dbReference type="PROSITE" id="PS00855">
    <property type="entry name" value="SPASE_II"/>
    <property type="match status" value="1"/>
</dbReference>
<feature type="chain" id="PRO_0000178824" description="Lipoprotein signal peptidase">
    <location>
        <begin position="1"/>
        <end position="152"/>
    </location>
</feature>
<feature type="transmembrane region" description="Helical" evidence="1">
    <location>
        <begin position="5"/>
        <end position="25"/>
    </location>
</feature>
<feature type="transmembrane region" description="Helical" evidence="1">
    <location>
        <begin position="61"/>
        <end position="81"/>
    </location>
</feature>
<feature type="transmembrane region" description="Helical" evidence="1">
    <location>
        <begin position="84"/>
        <end position="104"/>
    </location>
</feature>
<feature type="transmembrane region" description="Helical" evidence="1">
    <location>
        <begin position="125"/>
        <end position="145"/>
    </location>
</feature>
<feature type="active site" evidence="1">
    <location>
        <position position="114"/>
    </location>
</feature>
<feature type="active site" evidence="1">
    <location>
        <position position="130"/>
    </location>
</feature>
<organism>
    <name type="scientific">Streptococcus pyogenes serotype M3 (strain ATCC BAA-595 / MGAS315)</name>
    <dbReference type="NCBI Taxonomy" id="198466"/>
    <lineage>
        <taxon>Bacteria</taxon>
        <taxon>Bacillati</taxon>
        <taxon>Bacillota</taxon>
        <taxon>Bacilli</taxon>
        <taxon>Lactobacillales</taxon>
        <taxon>Streptococcaceae</taxon>
        <taxon>Streptococcus</taxon>
    </lineage>
</organism>
<comment type="function">
    <text evidence="1">This protein specifically catalyzes the removal of signal peptides from prolipoproteins.</text>
</comment>
<comment type="catalytic activity">
    <reaction evidence="1">
        <text>Release of signal peptides from bacterial membrane prolipoproteins. Hydrolyzes -Xaa-Yaa-Zaa-|-(S,diacylglyceryl)Cys-, in which Xaa is hydrophobic (preferably Leu), and Yaa (Ala or Ser) and Zaa (Gly or Ala) have small, neutral side chains.</text>
        <dbReference type="EC" id="3.4.23.36"/>
    </reaction>
</comment>
<comment type="pathway">
    <text evidence="1">Protein modification; lipoprotein biosynthesis (signal peptide cleavage).</text>
</comment>
<comment type="subcellular location">
    <subcellularLocation>
        <location evidence="1">Cell membrane</location>
        <topology evidence="1">Multi-pass membrane protein</topology>
    </subcellularLocation>
</comment>
<comment type="similarity">
    <text evidence="1">Belongs to the peptidase A8 family.</text>
</comment>
<gene>
    <name evidence="1" type="primary">lspA</name>
    <name type="ordered locus">SpyM3_0556</name>
</gene>
<proteinExistence type="inferred from homology"/>
<accession>P0DC20</accession>
<accession>Q79WT8</accession>
<accession>Q8K7Y7</accession>
<sequence length="152" mass="17272">MKKRLFVLSLILLVALDQLSKFWIVSHIALGEVKPFIPGIVSLTYLQNNGAAFSILQDQQWFFVVITVLVIGYAIYYLATHPHLNIWKQLALLLIISGGIGNFIDRLRLAYVIDMVHLDFVDFAIFNVADSYLTVGVILLVICLWKEEDYGN</sequence>
<evidence type="ECO:0000255" key="1">
    <source>
        <dbReference type="HAMAP-Rule" id="MF_00161"/>
    </source>
</evidence>
<name>LSPA_STRP3</name>
<keyword id="KW-0064">Aspartyl protease</keyword>
<keyword id="KW-1003">Cell membrane</keyword>
<keyword id="KW-0378">Hydrolase</keyword>
<keyword id="KW-0472">Membrane</keyword>
<keyword id="KW-0645">Protease</keyword>
<keyword id="KW-0812">Transmembrane</keyword>
<keyword id="KW-1133">Transmembrane helix</keyword>
<reference key="1">
    <citation type="journal article" date="2002" name="Proc. Natl. Acad. Sci. U.S.A.">
        <title>Genome sequence of a serotype M3 strain of group A Streptococcus: phage-encoded toxins, the high-virulence phenotype, and clone emergence.</title>
        <authorList>
            <person name="Beres S.B."/>
            <person name="Sylva G.L."/>
            <person name="Barbian K.D."/>
            <person name="Lei B."/>
            <person name="Hoff J.S."/>
            <person name="Mammarella N.D."/>
            <person name="Liu M.-Y."/>
            <person name="Smoot J.C."/>
            <person name="Porcella S.F."/>
            <person name="Parkins L.D."/>
            <person name="Campbell D.S."/>
            <person name="Smith T.M."/>
            <person name="McCormick J.K."/>
            <person name="Leung D.Y.M."/>
            <person name="Schlievert P.M."/>
            <person name="Musser J.M."/>
        </authorList>
    </citation>
    <scope>NUCLEOTIDE SEQUENCE [LARGE SCALE GENOMIC DNA]</scope>
    <source>
        <strain>ATCC BAA-595 / MGAS315</strain>
    </source>
</reference>